<reference key="1">
    <citation type="submission" date="2008-02" db="EMBL/GenBank/DDBJ databases">
        <title>Complete sequence of Shewanella woodyi ATCC 51908.</title>
        <authorList>
            <consortium name="US DOE Joint Genome Institute"/>
            <person name="Copeland A."/>
            <person name="Lucas S."/>
            <person name="Lapidus A."/>
            <person name="Glavina del Rio T."/>
            <person name="Dalin E."/>
            <person name="Tice H."/>
            <person name="Bruce D."/>
            <person name="Goodwin L."/>
            <person name="Pitluck S."/>
            <person name="Sims D."/>
            <person name="Brettin T."/>
            <person name="Detter J.C."/>
            <person name="Han C."/>
            <person name="Kuske C.R."/>
            <person name="Schmutz J."/>
            <person name="Larimer F."/>
            <person name="Land M."/>
            <person name="Hauser L."/>
            <person name="Kyrpides N."/>
            <person name="Lykidis A."/>
            <person name="Zhao J.-S."/>
            <person name="Richardson P."/>
        </authorList>
    </citation>
    <scope>NUCLEOTIDE SEQUENCE [LARGE SCALE GENOMIC DNA]</scope>
    <source>
        <strain>ATCC 51908 / MS32</strain>
    </source>
</reference>
<organism>
    <name type="scientific">Shewanella woodyi (strain ATCC 51908 / MS32)</name>
    <dbReference type="NCBI Taxonomy" id="392500"/>
    <lineage>
        <taxon>Bacteria</taxon>
        <taxon>Pseudomonadati</taxon>
        <taxon>Pseudomonadota</taxon>
        <taxon>Gammaproteobacteria</taxon>
        <taxon>Alteromonadales</taxon>
        <taxon>Shewanellaceae</taxon>
        <taxon>Shewanella</taxon>
    </lineage>
</organism>
<keyword id="KW-1185">Reference proteome</keyword>
<keyword id="KW-0687">Ribonucleoprotein</keyword>
<keyword id="KW-0689">Ribosomal protein</keyword>
<dbReference type="EMBL" id="CP000961">
    <property type="protein sequence ID" value="ACA88948.1"/>
    <property type="molecule type" value="Genomic_DNA"/>
</dbReference>
<dbReference type="RefSeq" id="WP_012327267.1">
    <property type="nucleotide sequence ID" value="NC_010506.1"/>
</dbReference>
<dbReference type="SMR" id="B1KMZ1"/>
<dbReference type="STRING" id="392500.Swoo_4698"/>
<dbReference type="KEGG" id="swd:Swoo_4698"/>
<dbReference type="eggNOG" id="COG0222">
    <property type="taxonomic scope" value="Bacteria"/>
</dbReference>
<dbReference type="HOGENOM" id="CLU_086499_3_2_6"/>
<dbReference type="Proteomes" id="UP000002168">
    <property type="component" value="Chromosome"/>
</dbReference>
<dbReference type="GO" id="GO:0022625">
    <property type="term" value="C:cytosolic large ribosomal subunit"/>
    <property type="evidence" value="ECO:0007669"/>
    <property type="project" value="TreeGrafter"/>
</dbReference>
<dbReference type="GO" id="GO:0003729">
    <property type="term" value="F:mRNA binding"/>
    <property type="evidence" value="ECO:0007669"/>
    <property type="project" value="TreeGrafter"/>
</dbReference>
<dbReference type="GO" id="GO:0003735">
    <property type="term" value="F:structural constituent of ribosome"/>
    <property type="evidence" value="ECO:0007669"/>
    <property type="project" value="InterPro"/>
</dbReference>
<dbReference type="GO" id="GO:0006412">
    <property type="term" value="P:translation"/>
    <property type="evidence" value="ECO:0007669"/>
    <property type="project" value="UniProtKB-UniRule"/>
</dbReference>
<dbReference type="CDD" id="cd00387">
    <property type="entry name" value="Ribosomal_L7_L12"/>
    <property type="match status" value="1"/>
</dbReference>
<dbReference type="FunFam" id="1.20.5.710:FF:000001">
    <property type="entry name" value="50S ribosomal protein L7/L12"/>
    <property type="match status" value="1"/>
</dbReference>
<dbReference type="FunFam" id="3.30.1390.10:FF:000001">
    <property type="entry name" value="50S ribosomal protein L7/L12"/>
    <property type="match status" value="1"/>
</dbReference>
<dbReference type="Gene3D" id="3.30.1390.10">
    <property type="match status" value="1"/>
</dbReference>
<dbReference type="Gene3D" id="1.20.5.710">
    <property type="entry name" value="Single helix bin"/>
    <property type="match status" value="1"/>
</dbReference>
<dbReference type="HAMAP" id="MF_00368">
    <property type="entry name" value="Ribosomal_bL12"/>
    <property type="match status" value="1"/>
</dbReference>
<dbReference type="InterPro" id="IPR000206">
    <property type="entry name" value="Ribosomal_bL12"/>
</dbReference>
<dbReference type="InterPro" id="IPR013823">
    <property type="entry name" value="Ribosomal_bL12_C"/>
</dbReference>
<dbReference type="InterPro" id="IPR014719">
    <property type="entry name" value="Ribosomal_bL12_C/ClpS-like"/>
</dbReference>
<dbReference type="InterPro" id="IPR008932">
    <property type="entry name" value="Ribosomal_bL12_oligo"/>
</dbReference>
<dbReference type="InterPro" id="IPR036235">
    <property type="entry name" value="Ribosomal_bL12_oligo_N_sf"/>
</dbReference>
<dbReference type="NCBIfam" id="TIGR00855">
    <property type="entry name" value="L12"/>
    <property type="match status" value="1"/>
</dbReference>
<dbReference type="PANTHER" id="PTHR45987">
    <property type="entry name" value="39S RIBOSOMAL PROTEIN L12"/>
    <property type="match status" value="1"/>
</dbReference>
<dbReference type="PANTHER" id="PTHR45987:SF4">
    <property type="entry name" value="LARGE RIBOSOMAL SUBUNIT PROTEIN BL12M"/>
    <property type="match status" value="1"/>
</dbReference>
<dbReference type="Pfam" id="PF00542">
    <property type="entry name" value="Ribosomal_L12"/>
    <property type="match status" value="1"/>
</dbReference>
<dbReference type="Pfam" id="PF16320">
    <property type="entry name" value="Ribosomal_L12_N"/>
    <property type="match status" value="1"/>
</dbReference>
<dbReference type="SUPFAM" id="SSF54736">
    <property type="entry name" value="ClpS-like"/>
    <property type="match status" value="1"/>
</dbReference>
<dbReference type="SUPFAM" id="SSF48300">
    <property type="entry name" value="Ribosomal protein L7/12, oligomerisation (N-terminal) domain"/>
    <property type="match status" value="1"/>
</dbReference>
<name>RL7_SHEWM</name>
<gene>
    <name evidence="1" type="primary">rplL</name>
    <name type="ordered locus">Swoo_4698</name>
</gene>
<feature type="chain" id="PRO_1000121490" description="Large ribosomal subunit protein bL12">
    <location>
        <begin position="1"/>
        <end position="122"/>
    </location>
</feature>
<accession>B1KMZ1</accession>
<evidence type="ECO:0000255" key="1">
    <source>
        <dbReference type="HAMAP-Rule" id="MF_00368"/>
    </source>
</evidence>
<evidence type="ECO:0000305" key="2"/>
<sequence length="122" mass="12432">MSITKDQILEAFAEMSVMEVVELIEAMEEKFGVSAAAAVVAGGAEGGAAAAEQTEFDVMMTSFGANKVAVIKALRGATGLGLKEAKAMAESAPVAVKEGLEKAEAEALKAELEAAGAEVEIK</sequence>
<proteinExistence type="inferred from homology"/>
<protein>
    <recommendedName>
        <fullName evidence="1">Large ribosomal subunit protein bL12</fullName>
    </recommendedName>
    <alternativeName>
        <fullName evidence="2">50S ribosomal protein L7/L12</fullName>
    </alternativeName>
</protein>
<comment type="function">
    <text evidence="1">Forms part of the ribosomal stalk which helps the ribosome interact with GTP-bound translation factors. Is thus essential for accurate translation.</text>
</comment>
<comment type="subunit">
    <text evidence="1">Homodimer. Part of the ribosomal stalk of the 50S ribosomal subunit. Forms a multimeric L10(L12)X complex, where L10 forms an elongated spine to which 2 to 4 L12 dimers bind in a sequential fashion. Binds GTP-bound translation factors.</text>
</comment>
<comment type="similarity">
    <text evidence="1">Belongs to the bacterial ribosomal protein bL12 family.</text>
</comment>